<protein>
    <recommendedName>
        <fullName>Skp-like protein</fullName>
    </recommendedName>
</protein>
<feature type="signal peptide" evidence="1">
    <location>
        <begin position="1"/>
        <end position="19"/>
    </location>
</feature>
<feature type="chain" id="PRO_0000020186" description="Skp-like protein">
    <location>
        <begin position="20"/>
        <end position="173"/>
    </location>
</feature>
<proteinExistence type="inferred from homology"/>
<sequence>MKKFLLLSLMSLASSTVFAASSTNTIGIVNLRRCLEESELGKKESAEFEKMKNQFSNSIGKMEEELSSIYSKLQDDDYMEGLSESAAAELRKKFEELSSEYNTAQGQYYQILNQNNLKRMQKIMEAVKKASEVVRIQEGLSALLNEDIVLAIDTSSDKTDAVIKILDDSFQNN</sequence>
<gene>
    <name type="ordered locus">TC_0513</name>
</gene>
<dbReference type="EMBL" id="AE002160">
    <property type="protein sequence ID" value="AAF39355.1"/>
    <property type="molecule type" value="Genomic_DNA"/>
</dbReference>
<dbReference type="PIR" id="A81694">
    <property type="entry name" value="A81694"/>
</dbReference>
<dbReference type="RefSeq" id="WP_010230655.1">
    <property type="nucleotide sequence ID" value="NZ_CP027217.1"/>
</dbReference>
<dbReference type="SMR" id="Q9PKF2"/>
<dbReference type="GeneID" id="1245873"/>
<dbReference type="KEGG" id="cmu:TC_0513"/>
<dbReference type="eggNOG" id="COG2825">
    <property type="taxonomic scope" value="Bacteria"/>
</dbReference>
<dbReference type="HOGENOM" id="CLU_127164_0_0_0"/>
<dbReference type="OrthoDB" id="17869at2"/>
<dbReference type="Proteomes" id="UP000000800">
    <property type="component" value="Chromosome"/>
</dbReference>
<dbReference type="GO" id="GO:0005829">
    <property type="term" value="C:cytosol"/>
    <property type="evidence" value="ECO:0007669"/>
    <property type="project" value="TreeGrafter"/>
</dbReference>
<dbReference type="GO" id="GO:0051082">
    <property type="term" value="F:unfolded protein binding"/>
    <property type="evidence" value="ECO:0007669"/>
    <property type="project" value="InterPro"/>
</dbReference>
<dbReference type="GO" id="GO:0061077">
    <property type="term" value="P:chaperone-mediated protein folding"/>
    <property type="evidence" value="ECO:0007669"/>
    <property type="project" value="TreeGrafter"/>
</dbReference>
<dbReference type="GO" id="GO:0050821">
    <property type="term" value="P:protein stabilization"/>
    <property type="evidence" value="ECO:0007669"/>
    <property type="project" value="TreeGrafter"/>
</dbReference>
<dbReference type="Gene3D" id="3.30.910.20">
    <property type="entry name" value="Skp domain"/>
    <property type="match status" value="1"/>
</dbReference>
<dbReference type="InterPro" id="IPR005632">
    <property type="entry name" value="Chaperone_Skp"/>
</dbReference>
<dbReference type="InterPro" id="IPR024930">
    <property type="entry name" value="Skp_dom_sf"/>
</dbReference>
<dbReference type="PANTHER" id="PTHR35089">
    <property type="entry name" value="CHAPERONE PROTEIN SKP"/>
    <property type="match status" value="1"/>
</dbReference>
<dbReference type="PANTHER" id="PTHR35089:SF1">
    <property type="entry name" value="CHAPERONE PROTEIN SKP"/>
    <property type="match status" value="1"/>
</dbReference>
<dbReference type="Pfam" id="PF03938">
    <property type="entry name" value="OmpH"/>
    <property type="match status" value="1"/>
</dbReference>
<dbReference type="SMART" id="SM00935">
    <property type="entry name" value="OmpH"/>
    <property type="match status" value="1"/>
</dbReference>
<dbReference type="SUPFAM" id="SSF111384">
    <property type="entry name" value="OmpH-like"/>
    <property type="match status" value="1"/>
</dbReference>
<keyword id="KW-0732">Signal</keyword>
<name>SKPL_CHLMU</name>
<accession>Q9PKF2</accession>
<comment type="similarity">
    <text evidence="2">Belongs to the Skp family.</text>
</comment>
<evidence type="ECO:0000255" key="1"/>
<evidence type="ECO:0000305" key="2"/>
<reference key="1">
    <citation type="journal article" date="2000" name="Nucleic Acids Res.">
        <title>Genome sequences of Chlamydia trachomatis MoPn and Chlamydia pneumoniae AR39.</title>
        <authorList>
            <person name="Read T.D."/>
            <person name="Brunham R.C."/>
            <person name="Shen C."/>
            <person name="Gill S.R."/>
            <person name="Heidelberg J.F."/>
            <person name="White O."/>
            <person name="Hickey E.K."/>
            <person name="Peterson J.D."/>
            <person name="Utterback T.R."/>
            <person name="Berry K.J."/>
            <person name="Bass S."/>
            <person name="Linher K.D."/>
            <person name="Weidman J.F."/>
            <person name="Khouri H.M."/>
            <person name="Craven B."/>
            <person name="Bowman C."/>
            <person name="Dodson R.J."/>
            <person name="Gwinn M.L."/>
            <person name="Nelson W.C."/>
            <person name="DeBoy R.T."/>
            <person name="Kolonay J.F."/>
            <person name="McClarty G."/>
            <person name="Salzberg S.L."/>
            <person name="Eisen J.A."/>
            <person name="Fraser C.M."/>
        </authorList>
    </citation>
    <scope>NUCLEOTIDE SEQUENCE [LARGE SCALE GENOMIC DNA]</scope>
    <source>
        <strain>MoPn / Nigg</strain>
    </source>
</reference>
<organism>
    <name type="scientific">Chlamydia muridarum (strain MoPn / Nigg)</name>
    <dbReference type="NCBI Taxonomy" id="243161"/>
    <lineage>
        <taxon>Bacteria</taxon>
        <taxon>Pseudomonadati</taxon>
        <taxon>Chlamydiota</taxon>
        <taxon>Chlamydiia</taxon>
        <taxon>Chlamydiales</taxon>
        <taxon>Chlamydiaceae</taxon>
        <taxon>Chlamydia/Chlamydophila group</taxon>
        <taxon>Chlamydia</taxon>
    </lineage>
</organism>